<gene>
    <name evidence="1" type="primary">rpl21</name>
</gene>
<accession>Q1XDS8</accession>
<proteinExistence type="inferred from homology"/>
<comment type="function">
    <text evidence="1">This protein binds to 23S rRNA.</text>
</comment>
<comment type="subunit">
    <text evidence="1">Part of the 50S ribosomal subunit.</text>
</comment>
<comment type="subcellular location">
    <subcellularLocation>
        <location>Plastid</location>
        <location>Chloroplast</location>
    </subcellularLocation>
</comment>
<comment type="similarity">
    <text evidence="1">Belongs to the bacterial ribosomal protein bL21 family.</text>
</comment>
<organism>
    <name type="scientific">Pyropia yezoensis</name>
    <name type="common">Susabi-nori</name>
    <name type="synonym">Porphyra yezoensis</name>
    <dbReference type="NCBI Taxonomy" id="2788"/>
    <lineage>
        <taxon>Eukaryota</taxon>
        <taxon>Rhodophyta</taxon>
        <taxon>Bangiophyceae</taxon>
        <taxon>Bangiales</taxon>
        <taxon>Bangiaceae</taxon>
        <taxon>Pyropia</taxon>
    </lineage>
</organism>
<feature type="chain" id="PRO_0000269448" description="Large ribosomal subunit protein bL21c">
    <location>
        <begin position="1"/>
        <end position="104"/>
    </location>
</feature>
<reference key="1">
    <citation type="submission" date="2003-11" db="EMBL/GenBank/DDBJ databases">
        <title>Whole genome sequence of Porphyra yezoensis chloroplast.</title>
        <authorList>
            <person name="Kunimoto M."/>
            <person name="Morishima K."/>
            <person name="Yoshikawa M."/>
            <person name="Fukuda S."/>
            <person name="Kobayashi T."/>
            <person name="Kobayashi M."/>
            <person name="Okazaki T."/>
            <person name="Ohara I."/>
            <person name="Nakayama I."/>
        </authorList>
    </citation>
    <scope>NUCLEOTIDE SEQUENCE [LARGE SCALE GENOMIC DNA]</scope>
    <source>
        <strain>U-51</strain>
    </source>
</reference>
<geneLocation type="chloroplast"/>
<evidence type="ECO:0000255" key="1">
    <source>
        <dbReference type="HAMAP-Rule" id="MF_01363"/>
    </source>
</evidence>
<evidence type="ECO:0000305" key="2"/>
<name>RK21_PYRYE</name>
<keyword id="KW-0150">Chloroplast</keyword>
<keyword id="KW-0934">Plastid</keyword>
<keyword id="KW-0687">Ribonucleoprotein</keyword>
<keyword id="KW-0689">Ribosomal protein</keyword>
<keyword id="KW-0694">RNA-binding</keyword>
<keyword id="KW-0699">rRNA-binding</keyword>
<dbReference type="EMBL" id="AP006715">
    <property type="protein sequence ID" value="BAE92333.1"/>
    <property type="molecule type" value="Genomic_DNA"/>
</dbReference>
<dbReference type="RefSeq" id="YP_536890.1">
    <property type="nucleotide sequence ID" value="NC_007932.1"/>
</dbReference>
<dbReference type="SMR" id="Q1XDS8"/>
<dbReference type="GeneID" id="3978864"/>
<dbReference type="GO" id="GO:0009507">
    <property type="term" value="C:chloroplast"/>
    <property type="evidence" value="ECO:0007669"/>
    <property type="project" value="UniProtKB-SubCell"/>
</dbReference>
<dbReference type="GO" id="GO:0005762">
    <property type="term" value="C:mitochondrial large ribosomal subunit"/>
    <property type="evidence" value="ECO:0007669"/>
    <property type="project" value="TreeGrafter"/>
</dbReference>
<dbReference type="GO" id="GO:0019843">
    <property type="term" value="F:rRNA binding"/>
    <property type="evidence" value="ECO:0007669"/>
    <property type="project" value="UniProtKB-UniRule"/>
</dbReference>
<dbReference type="GO" id="GO:0003735">
    <property type="term" value="F:structural constituent of ribosome"/>
    <property type="evidence" value="ECO:0007669"/>
    <property type="project" value="InterPro"/>
</dbReference>
<dbReference type="GO" id="GO:0006412">
    <property type="term" value="P:translation"/>
    <property type="evidence" value="ECO:0007669"/>
    <property type="project" value="UniProtKB-UniRule"/>
</dbReference>
<dbReference type="HAMAP" id="MF_01363">
    <property type="entry name" value="Ribosomal_bL21"/>
    <property type="match status" value="1"/>
</dbReference>
<dbReference type="InterPro" id="IPR028909">
    <property type="entry name" value="bL21-like"/>
</dbReference>
<dbReference type="InterPro" id="IPR036164">
    <property type="entry name" value="bL21-like_sf"/>
</dbReference>
<dbReference type="InterPro" id="IPR001787">
    <property type="entry name" value="Ribosomal_bL21"/>
</dbReference>
<dbReference type="InterPro" id="IPR018258">
    <property type="entry name" value="Ribosomal_bL21_CS"/>
</dbReference>
<dbReference type="NCBIfam" id="TIGR00061">
    <property type="entry name" value="L21"/>
    <property type="match status" value="1"/>
</dbReference>
<dbReference type="PANTHER" id="PTHR21349">
    <property type="entry name" value="50S RIBOSOMAL PROTEIN L21"/>
    <property type="match status" value="1"/>
</dbReference>
<dbReference type="PANTHER" id="PTHR21349:SF7">
    <property type="entry name" value="LARGE RIBOSOMAL SUBUNIT PROTEIN BL21C"/>
    <property type="match status" value="1"/>
</dbReference>
<dbReference type="Pfam" id="PF00829">
    <property type="entry name" value="Ribosomal_L21p"/>
    <property type="match status" value="1"/>
</dbReference>
<dbReference type="SUPFAM" id="SSF141091">
    <property type="entry name" value="L21p-like"/>
    <property type="match status" value="1"/>
</dbReference>
<dbReference type="PROSITE" id="PS01169">
    <property type="entry name" value="RIBOSOMAL_L21"/>
    <property type="match status" value="1"/>
</dbReference>
<protein>
    <recommendedName>
        <fullName evidence="1">Large ribosomal subunit protein bL21c</fullName>
    </recommendedName>
    <alternativeName>
        <fullName evidence="2">50S ribosomal protein L21, chloroplastic</fullName>
    </alternativeName>
</protein>
<sequence>MTYAIIEASGTQLWIEEGRYYDLNHIPVDPGQSIILGKVLLLNKNGEVTLGRPCIEGVTIKATVMRHLRGKKITVFKMKPKKKMRLKKGHRQELTRLMIDSITS</sequence>